<reference key="1">
    <citation type="journal article" date="1993" name="J. Biol. Chem.">
        <title>Recoverin has S-modulin activity in frog rods.</title>
        <authorList>
            <person name="Kawamura S."/>
            <person name="Hisatomi O."/>
            <person name="Kayada S."/>
            <person name="Tokunaga F."/>
            <person name="Kuo C.-H."/>
        </authorList>
    </citation>
    <scope>NUCLEOTIDE SEQUENCE [MRNA]</scope>
    <source>
        <tissue>Retina</tissue>
    </source>
</reference>
<reference key="2">
    <citation type="journal article" date="1992" name="Biochem. Biophys. Res. Commun.">
        <title>Purification and characterization of S-modulin, a calcium-dependent regulator on cGMP phosphodiesterase in frog rod photoreceptors.</title>
        <authorList>
            <person name="Kawamura S."/>
            <person name="Takamatsu K."/>
            <person name="Kitamura K."/>
        </authorList>
    </citation>
    <scope>PROTEIN SEQUENCE OF 22-28; 47-55; 63-97; 131-150; 154-162; 167-177 AND 180-192</scope>
    <source>
        <tissue>Retina</tissue>
    </source>
</reference>
<sequence>MGNTKSGALSKEILEELQLNTKFTQEELCTWYQSFLKECPSGRISKKQFESIYSKFFPDADPKAYAQHVFRSFDANNDGTLDFKEYMIALMMTSSGKANQKLEWAFCLYDVDGNGTINKKEVLEIITAIFKMINAEDQKHLPEDENTPEKRTNKIWVYFGKKDDDKLTEGEFIQGIVKNKEILRLIQYEPQKVKDKLKEKKH</sequence>
<protein>
    <recommendedName>
        <fullName>S-modulin</fullName>
    </recommendedName>
    <alternativeName>
        <fullName>Sensitivity-modulating protein</fullName>
    </alternativeName>
</protein>
<proteinExistence type="evidence at protein level"/>
<accession>P31227</accession>
<evidence type="ECO:0000250" key="1"/>
<evidence type="ECO:0000255" key="2">
    <source>
        <dbReference type="PROSITE-ProRule" id="PRU00448"/>
    </source>
</evidence>
<evidence type="ECO:0000305" key="3"/>
<dbReference type="EMBL" id="D83641">
    <property type="protein sequence ID" value="BAA19728.1"/>
    <property type="molecule type" value="mRNA"/>
</dbReference>
<dbReference type="PIR" id="JC1107">
    <property type="entry name" value="JC1107"/>
</dbReference>
<dbReference type="PIR" id="T10531">
    <property type="entry name" value="T10531"/>
</dbReference>
<dbReference type="SMR" id="P31227"/>
<dbReference type="GO" id="GO:0005509">
    <property type="term" value="F:calcium ion binding"/>
    <property type="evidence" value="ECO:0007669"/>
    <property type="project" value="InterPro"/>
</dbReference>
<dbReference type="GO" id="GO:0007601">
    <property type="term" value="P:visual perception"/>
    <property type="evidence" value="ECO:0007669"/>
    <property type="project" value="UniProtKB-KW"/>
</dbReference>
<dbReference type="CDD" id="cd00051">
    <property type="entry name" value="EFh"/>
    <property type="match status" value="1"/>
</dbReference>
<dbReference type="FunFam" id="1.10.238.10:FF:000009">
    <property type="entry name" value="Visinin-like protein 1"/>
    <property type="match status" value="1"/>
</dbReference>
<dbReference type="Gene3D" id="1.10.238.10">
    <property type="entry name" value="EF-hand"/>
    <property type="match status" value="2"/>
</dbReference>
<dbReference type="InterPro" id="IPR011992">
    <property type="entry name" value="EF-hand-dom_pair"/>
</dbReference>
<dbReference type="InterPro" id="IPR018247">
    <property type="entry name" value="EF_Hand_1_Ca_BS"/>
</dbReference>
<dbReference type="InterPro" id="IPR002048">
    <property type="entry name" value="EF_hand_dom"/>
</dbReference>
<dbReference type="InterPro" id="IPR028846">
    <property type="entry name" value="Recoverin"/>
</dbReference>
<dbReference type="PANTHER" id="PTHR23055">
    <property type="entry name" value="CALCIUM BINDING PROTEINS"/>
    <property type="match status" value="1"/>
</dbReference>
<dbReference type="PANTHER" id="PTHR23055:SF20">
    <property type="entry name" value="RECOVERIN"/>
    <property type="match status" value="1"/>
</dbReference>
<dbReference type="Pfam" id="PF13202">
    <property type="entry name" value="EF-hand_5"/>
    <property type="match status" value="1"/>
</dbReference>
<dbReference type="Pfam" id="PF13499">
    <property type="entry name" value="EF-hand_7"/>
    <property type="match status" value="1"/>
</dbReference>
<dbReference type="PRINTS" id="PR00450">
    <property type="entry name" value="RECOVERIN"/>
</dbReference>
<dbReference type="SMART" id="SM00054">
    <property type="entry name" value="EFh"/>
    <property type="match status" value="2"/>
</dbReference>
<dbReference type="SUPFAM" id="SSF47473">
    <property type="entry name" value="EF-hand"/>
    <property type="match status" value="1"/>
</dbReference>
<dbReference type="PROSITE" id="PS00018">
    <property type="entry name" value="EF_HAND_1"/>
    <property type="match status" value="2"/>
</dbReference>
<dbReference type="PROSITE" id="PS50222">
    <property type="entry name" value="EF_HAND_2"/>
    <property type="match status" value="3"/>
</dbReference>
<feature type="initiator methionine" description="Removed" evidence="1">
    <location>
        <position position="1"/>
    </location>
</feature>
<feature type="chain" id="PRO_0000073799" description="S-modulin">
    <location>
        <begin position="2"/>
        <end position="202"/>
    </location>
</feature>
<feature type="domain" description="EF-hand 1" evidence="3">
    <location>
        <begin position="25"/>
        <end position="60"/>
    </location>
</feature>
<feature type="domain" description="EF-hand 2" evidence="2">
    <location>
        <begin position="61"/>
        <end position="96"/>
    </location>
</feature>
<feature type="domain" description="EF-hand 3" evidence="2">
    <location>
        <begin position="97"/>
        <end position="132"/>
    </location>
</feature>
<feature type="domain" description="EF-hand 4" evidence="2">
    <location>
        <begin position="147"/>
        <end position="182"/>
    </location>
</feature>
<feature type="binding site" evidence="2">
    <location>
        <position position="74"/>
    </location>
    <ligand>
        <name>Ca(2+)</name>
        <dbReference type="ChEBI" id="CHEBI:29108"/>
        <label>1</label>
    </ligand>
</feature>
<feature type="binding site" evidence="2">
    <location>
        <position position="76"/>
    </location>
    <ligand>
        <name>Ca(2+)</name>
        <dbReference type="ChEBI" id="CHEBI:29108"/>
        <label>1</label>
    </ligand>
</feature>
<feature type="binding site" evidence="2">
    <location>
        <position position="78"/>
    </location>
    <ligand>
        <name>Ca(2+)</name>
        <dbReference type="ChEBI" id="CHEBI:29108"/>
        <label>1</label>
    </ligand>
</feature>
<feature type="binding site" evidence="2">
    <location>
        <position position="80"/>
    </location>
    <ligand>
        <name>Ca(2+)</name>
        <dbReference type="ChEBI" id="CHEBI:29108"/>
        <label>1</label>
    </ligand>
</feature>
<feature type="binding site" evidence="2">
    <location>
        <position position="85"/>
    </location>
    <ligand>
        <name>Ca(2+)</name>
        <dbReference type="ChEBI" id="CHEBI:29108"/>
        <label>1</label>
    </ligand>
</feature>
<feature type="binding site" evidence="2">
    <location>
        <position position="110"/>
    </location>
    <ligand>
        <name>Ca(2+)</name>
        <dbReference type="ChEBI" id="CHEBI:29108"/>
        <label>2</label>
    </ligand>
</feature>
<feature type="binding site" evidence="2">
    <location>
        <position position="112"/>
    </location>
    <ligand>
        <name>Ca(2+)</name>
        <dbReference type="ChEBI" id="CHEBI:29108"/>
        <label>2</label>
    </ligand>
</feature>
<feature type="binding site" evidence="2">
    <location>
        <position position="114"/>
    </location>
    <ligand>
        <name>Ca(2+)</name>
        <dbReference type="ChEBI" id="CHEBI:29108"/>
        <label>2</label>
    </ligand>
</feature>
<feature type="binding site" evidence="2">
    <location>
        <position position="116"/>
    </location>
    <ligand>
        <name>Ca(2+)</name>
        <dbReference type="ChEBI" id="CHEBI:29108"/>
        <label>2</label>
    </ligand>
</feature>
<feature type="binding site" evidence="2">
    <location>
        <position position="121"/>
    </location>
    <ligand>
        <name>Ca(2+)</name>
        <dbReference type="ChEBI" id="CHEBI:29108"/>
        <label>2</label>
    </ligand>
</feature>
<feature type="lipid moiety-binding region" description="N-myristoyl glycine" evidence="1">
    <location>
        <position position="2"/>
    </location>
</feature>
<feature type="sequence conflict" description="In Ref. 1; BAA19728." evidence="3" ref="1">
    <original>M</original>
    <variation>H</variation>
    <location>
        <position position="91"/>
    </location>
</feature>
<comment type="function">
    <text>Calcium-dependent regulator of light sensitivity of cGMP phosphodiesterase in rod outer segments. Controls rhodopsin phosphorylation in a Ca(2+)-dependent manner.</text>
</comment>
<comment type="subcellular location">
    <text>The binding target of the Ca(2+)/S-modulin complex is possibly ROS membrane lipid(s).</text>
</comment>
<comment type="PTM">
    <text>The N-terminus is blocked.</text>
</comment>
<comment type="similarity">
    <text evidence="3">Belongs to the recoverin family.</text>
</comment>
<keyword id="KW-0106">Calcium</keyword>
<keyword id="KW-0903">Direct protein sequencing</keyword>
<keyword id="KW-0449">Lipoprotein</keyword>
<keyword id="KW-0479">Metal-binding</keyword>
<keyword id="KW-0519">Myristate</keyword>
<keyword id="KW-0677">Repeat</keyword>
<keyword id="KW-0716">Sensory transduction</keyword>
<keyword id="KW-0844">Vision</keyword>
<organism>
    <name type="scientific">Aquarana catesbeiana</name>
    <name type="common">American bullfrog</name>
    <name type="synonym">Rana catesbeiana</name>
    <dbReference type="NCBI Taxonomy" id="8400"/>
    <lineage>
        <taxon>Eukaryota</taxon>
        <taxon>Metazoa</taxon>
        <taxon>Chordata</taxon>
        <taxon>Craniata</taxon>
        <taxon>Vertebrata</taxon>
        <taxon>Euteleostomi</taxon>
        <taxon>Amphibia</taxon>
        <taxon>Batrachia</taxon>
        <taxon>Anura</taxon>
        <taxon>Neobatrachia</taxon>
        <taxon>Ranoidea</taxon>
        <taxon>Ranidae</taxon>
        <taxon>Aquarana</taxon>
    </lineage>
</organism>
<name>SMOD_AQUCT</name>